<keyword id="KW-0514">Muscle protein</keyword>
<keyword id="KW-1185">Reference proteome</keyword>
<evidence type="ECO:0000255" key="1">
    <source>
        <dbReference type="PROSITE-ProRule" id="PRU00044"/>
    </source>
</evidence>
<evidence type="ECO:0000269" key="2">
    <source>
    </source>
</evidence>
<evidence type="ECO:0000305" key="3"/>
<gene>
    <name type="primary">Mp20</name>
    <name type="synonym">Tpn</name>
    <name type="ORF">CG4696</name>
</gene>
<dbReference type="EMBL" id="Y00795">
    <property type="protein sequence ID" value="CAA68746.1"/>
    <property type="molecule type" value="Genomic_DNA"/>
</dbReference>
<dbReference type="EMBL" id="AE013599">
    <property type="protein sequence ID" value="AAF58396.1"/>
    <property type="molecule type" value="Genomic_DNA"/>
</dbReference>
<dbReference type="EMBL" id="AE013599">
    <property type="protein sequence ID" value="AAM68603.1"/>
    <property type="molecule type" value="Genomic_DNA"/>
</dbReference>
<dbReference type="EMBL" id="AY071496">
    <property type="protein sequence ID" value="AAL49118.1"/>
    <property type="molecule type" value="mRNA"/>
</dbReference>
<dbReference type="EMBL" id="BT024979">
    <property type="protein sequence ID" value="ABE01209.1"/>
    <property type="status" value="ALT_INIT"/>
    <property type="molecule type" value="mRNA"/>
</dbReference>
<dbReference type="PIR" id="A30128">
    <property type="entry name" value="A30128"/>
</dbReference>
<dbReference type="RefSeq" id="NP_001014522.2">
    <property type="nucleotide sequence ID" value="NM_001014522.2"/>
</dbReference>
<dbReference type="RefSeq" id="NP_476643.1">
    <property type="nucleotide sequence ID" value="NM_057295.4"/>
</dbReference>
<dbReference type="SMR" id="P14318"/>
<dbReference type="BioGRID" id="62231">
    <property type="interactions" value="9"/>
</dbReference>
<dbReference type="DIP" id="DIP-18096N"/>
<dbReference type="FunCoup" id="P14318">
    <property type="interactions" value="34"/>
</dbReference>
<dbReference type="IntAct" id="P14318">
    <property type="interactions" value="54"/>
</dbReference>
<dbReference type="STRING" id="7227.FBpp0311634"/>
<dbReference type="PaxDb" id="7227-FBpp0086858"/>
<dbReference type="DNASU" id="36468"/>
<dbReference type="EnsemblMetazoa" id="FBtr0087745">
    <property type="protein sequence ID" value="FBpp0086858"/>
    <property type="gene ID" value="FBgn0002789"/>
</dbReference>
<dbReference type="GeneID" id="36468"/>
<dbReference type="KEGG" id="dme:Dmel_CG4696"/>
<dbReference type="AGR" id="FB:FBgn0002789"/>
<dbReference type="CTD" id="36468"/>
<dbReference type="FlyBase" id="FBgn0002789">
    <property type="gene designation" value="Mp20"/>
</dbReference>
<dbReference type="VEuPathDB" id="VectorBase:FBgn0002789"/>
<dbReference type="eggNOG" id="KOG2046">
    <property type="taxonomic scope" value="Eukaryota"/>
</dbReference>
<dbReference type="GeneTree" id="ENSGT00940000170006"/>
<dbReference type="HOGENOM" id="CLU_055232_1_1_1"/>
<dbReference type="InParanoid" id="P14318"/>
<dbReference type="OMA" id="KWLMDGI"/>
<dbReference type="OrthoDB" id="21595at2759"/>
<dbReference type="PhylomeDB" id="P14318"/>
<dbReference type="SignaLink" id="P14318"/>
<dbReference type="BioGRID-ORCS" id="36468">
    <property type="hits" value="0 hits in 3 CRISPR screens"/>
</dbReference>
<dbReference type="ChiTaRS" id="Mp20">
    <property type="organism name" value="fly"/>
</dbReference>
<dbReference type="GenomeRNAi" id="36468"/>
<dbReference type="PRO" id="PR:P14318"/>
<dbReference type="Proteomes" id="UP000000803">
    <property type="component" value="Chromosome 2R"/>
</dbReference>
<dbReference type="Bgee" id="FBgn0002789">
    <property type="expression patterns" value="Expressed in oviduct (Drosophila) and 129 other cell types or tissues"/>
</dbReference>
<dbReference type="GO" id="GO:0015629">
    <property type="term" value="C:actin cytoskeleton"/>
    <property type="evidence" value="ECO:0000318"/>
    <property type="project" value="GO_Central"/>
</dbReference>
<dbReference type="GO" id="GO:0005737">
    <property type="term" value="C:cytoplasm"/>
    <property type="evidence" value="ECO:0007005"/>
    <property type="project" value="FlyBase"/>
</dbReference>
<dbReference type="GO" id="GO:0051015">
    <property type="term" value="F:actin filament binding"/>
    <property type="evidence" value="ECO:0000318"/>
    <property type="project" value="GO_Central"/>
</dbReference>
<dbReference type="GO" id="GO:0007015">
    <property type="term" value="P:actin filament organization"/>
    <property type="evidence" value="ECO:0000318"/>
    <property type="project" value="GO_Central"/>
</dbReference>
<dbReference type="GO" id="GO:0007520">
    <property type="term" value="P:myoblast fusion"/>
    <property type="evidence" value="ECO:0000315"/>
    <property type="project" value="FlyBase"/>
</dbReference>
<dbReference type="GO" id="GO:1901739">
    <property type="term" value="P:regulation of myoblast fusion"/>
    <property type="evidence" value="ECO:0000315"/>
    <property type="project" value="FlyBase"/>
</dbReference>
<dbReference type="CDD" id="cd21207">
    <property type="entry name" value="CH_dMP20-like"/>
    <property type="match status" value="1"/>
</dbReference>
<dbReference type="FunFam" id="1.10.418.10:FF:000101">
    <property type="entry name" value="Transgelin"/>
    <property type="match status" value="1"/>
</dbReference>
<dbReference type="Gene3D" id="1.10.418.10">
    <property type="entry name" value="Calponin-like domain"/>
    <property type="match status" value="1"/>
</dbReference>
<dbReference type="InterPro" id="IPR050606">
    <property type="entry name" value="Calponin-like"/>
</dbReference>
<dbReference type="InterPro" id="IPR000557">
    <property type="entry name" value="Calponin_repeat"/>
</dbReference>
<dbReference type="InterPro" id="IPR001715">
    <property type="entry name" value="CH_dom"/>
</dbReference>
<dbReference type="InterPro" id="IPR036872">
    <property type="entry name" value="CH_dom_sf"/>
</dbReference>
<dbReference type="InterPro" id="IPR003096">
    <property type="entry name" value="SM22_calponin"/>
</dbReference>
<dbReference type="PANTHER" id="PTHR47385">
    <property type="entry name" value="CALPONIN"/>
    <property type="match status" value="1"/>
</dbReference>
<dbReference type="PANTHER" id="PTHR47385:SF24">
    <property type="entry name" value="MUSCLE-SPECIFIC PROTEIN 20"/>
    <property type="match status" value="1"/>
</dbReference>
<dbReference type="Pfam" id="PF00402">
    <property type="entry name" value="Calponin"/>
    <property type="match status" value="1"/>
</dbReference>
<dbReference type="Pfam" id="PF00307">
    <property type="entry name" value="CH"/>
    <property type="match status" value="1"/>
</dbReference>
<dbReference type="PRINTS" id="PR00888">
    <property type="entry name" value="SM22CALPONIN"/>
</dbReference>
<dbReference type="SMART" id="SM00033">
    <property type="entry name" value="CH"/>
    <property type="match status" value="1"/>
</dbReference>
<dbReference type="SUPFAM" id="SSF47576">
    <property type="entry name" value="Calponin-homology domain, CH-domain"/>
    <property type="match status" value="1"/>
</dbReference>
<dbReference type="PROSITE" id="PS01052">
    <property type="entry name" value="CALPONIN_1"/>
    <property type="match status" value="1"/>
</dbReference>
<dbReference type="PROSITE" id="PS51122">
    <property type="entry name" value="CALPONIN_2"/>
    <property type="match status" value="1"/>
</dbReference>
<dbReference type="PROSITE" id="PS50021">
    <property type="entry name" value="CH"/>
    <property type="match status" value="1"/>
</dbReference>
<proteinExistence type="evidence at transcript level"/>
<feature type="chain" id="PRO_0000204779" description="Muscle-specific protein 20">
    <location>
        <begin position="1"/>
        <end position="184"/>
    </location>
</feature>
<feature type="domain" description="Calponin-homology (CH)" evidence="1">
    <location>
        <begin position="17"/>
        <end position="122"/>
    </location>
</feature>
<feature type="repeat" description="Calponin-like">
    <location>
        <begin position="157"/>
        <end position="181"/>
    </location>
</feature>
<feature type="sequence conflict" description="In Ref. 1; CAA68746." evidence="3" ref="1">
    <original>S</original>
    <variation>G</variation>
    <location>
        <position position="13"/>
    </location>
</feature>
<comment type="tissue specificity">
    <text evidence="2">Found in synchronous muscle; not found in asynchronous indirect flight muscle.</text>
</comment>
<comment type="similarity">
    <text evidence="3">Belongs to the calponin family.</text>
</comment>
<comment type="sequence caution" evidence="3">
    <conflict type="erroneous initiation">
        <sequence resource="EMBL-CDS" id="ABE01209"/>
    </conflict>
</comment>
<protein>
    <recommendedName>
        <fullName>Muscle-specific protein 20</fullName>
    </recommendedName>
</protein>
<sequence>MSLERAVRAKIASKRNPEMDKEAQEWIEAIIAEKFPAGQSYEDVLKDGQVLCKLINVLSPNAVPKVNSSGGQFKFMENINNFQKALKEYGVPDIDVFQTVDLYEKKDIANVTNTIFALGRATYKHADFKGPFLGPKPADECKRDFTEEQLKAGQTIVGLQAGSNKGATQAGQNLGAGRKILLGK</sequence>
<name>MP20_DROME</name>
<organism>
    <name type="scientific">Drosophila melanogaster</name>
    <name type="common">Fruit fly</name>
    <dbReference type="NCBI Taxonomy" id="7227"/>
    <lineage>
        <taxon>Eukaryota</taxon>
        <taxon>Metazoa</taxon>
        <taxon>Ecdysozoa</taxon>
        <taxon>Arthropoda</taxon>
        <taxon>Hexapoda</taxon>
        <taxon>Insecta</taxon>
        <taxon>Pterygota</taxon>
        <taxon>Neoptera</taxon>
        <taxon>Endopterygota</taxon>
        <taxon>Diptera</taxon>
        <taxon>Brachycera</taxon>
        <taxon>Muscomorpha</taxon>
        <taxon>Ephydroidea</taxon>
        <taxon>Drosophilidae</taxon>
        <taxon>Drosophila</taxon>
        <taxon>Sophophora</taxon>
    </lineage>
</organism>
<reference key="1">
    <citation type="journal article" date="1989" name="J. Cell Biol.">
        <title>Characterization of the gene for mp20: a Drosophila muscle protein that is not found in asynchronous oscillatory flight muscle.</title>
        <authorList>
            <person name="Ayme-Southgate A."/>
            <person name="Lasko P."/>
            <person name="French C."/>
            <person name="Pardue M.L."/>
        </authorList>
    </citation>
    <scope>NUCLEOTIDE SEQUENCE [GENOMIC DNA]</scope>
    <scope>TISSUE SPECIFICITY</scope>
    <source>
        <strain>Canton-S</strain>
        <tissue>Muscle</tissue>
    </source>
</reference>
<reference key="2">
    <citation type="journal article" date="2000" name="Science">
        <title>The genome sequence of Drosophila melanogaster.</title>
        <authorList>
            <person name="Adams M.D."/>
            <person name="Celniker S.E."/>
            <person name="Holt R.A."/>
            <person name="Evans C.A."/>
            <person name="Gocayne J.D."/>
            <person name="Amanatides P.G."/>
            <person name="Scherer S.E."/>
            <person name="Li P.W."/>
            <person name="Hoskins R.A."/>
            <person name="Galle R.F."/>
            <person name="George R.A."/>
            <person name="Lewis S.E."/>
            <person name="Richards S."/>
            <person name="Ashburner M."/>
            <person name="Henderson S.N."/>
            <person name="Sutton G.G."/>
            <person name="Wortman J.R."/>
            <person name="Yandell M.D."/>
            <person name="Zhang Q."/>
            <person name="Chen L.X."/>
            <person name="Brandon R.C."/>
            <person name="Rogers Y.-H.C."/>
            <person name="Blazej R.G."/>
            <person name="Champe M."/>
            <person name="Pfeiffer B.D."/>
            <person name="Wan K.H."/>
            <person name="Doyle C."/>
            <person name="Baxter E.G."/>
            <person name="Helt G."/>
            <person name="Nelson C.R."/>
            <person name="Miklos G.L.G."/>
            <person name="Abril J.F."/>
            <person name="Agbayani A."/>
            <person name="An H.-J."/>
            <person name="Andrews-Pfannkoch C."/>
            <person name="Baldwin D."/>
            <person name="Ballew R.M."/>
            <person name="Basu A."/>
            <person name="Baxendale J."/>
            <person name="Bayraktaroglu L."/>
            <person name="Beasley E.M."/>
            <person name="Beeson K.Y."/>
            <person name="Benos P.V."/>
            <person name="Berman B.P."/>
            <person name="Bhandari D."/>
            <person name="Bolshakov S."/>
            <person name="Borkova D."/>
            <person name="Botchan M.R."/>
            <person name="Bouck J."/>
            <person name="Brokstein P."/>
            <person name="Brottier P."/>
            <person name="Burtis K.C."/>
            <person name="Busam D.A."/>
            <person name="Butler H."/>
            <person name="Cadieu E."/>
            <person name="Center A."/>
            <person name="Chandra I."/>
            <person name="Cherry J.M."/>
            <person name="Cawley S."/>
            <person name="Dahlke C."/>
            <person name="Davenport L.B."/>
            <person name="Davies P."/>
            <person name="de Pablos B."/>
            <person name="Delcher A."/>
            <person name="Deng Z."/>
            <person name="Mays A.D."/>
            <person name="Dew I."/>
            <person name="Dietz S.M."/>
            <person name="Dodson K."/>
            <person name="Doup L.E."/>
            <person name="Downes M."/>
            <person name="Dugan-Rocha S."/>
            <person name="Dunkov B.C."/>
            <person name="Dunn P."/>
            <person name="Durbin K.J."/>
            <person name="Evangelista C.C."/>
            <person name="Ferraz C."/>
            <person name="Ferriera S."/>
            <person name="Fleischmann W."/>
            <person name="Fosler C."/>
            <person name="Gabrielian A.E."/>
            <person name="Garg N.S."/>
            <person name="Gelbart W.M."/>
            <person name="Glasser K."/>
            <person name="Glodek A."/>
            <person name="Gong F."/>
            <person name="Gorrell J.H."/>
            <person name="Gu Z."/>
            <person name="Guan P."/>
            <person name="Harris M."/>
            <person name="Harris N.L."/>
            <person name="Harvey D.A."/>
            <person name="Heiman T.J."/>
            <person name="Hernandez J.R."/>
            <person name="Houck J."/>
            <person name="Hostin D."/>
            <person name="Houston K.A."/>
            <person name="Howland T.J."/>
            <person name="Wei M.-H."/>
            <person name="Ibegwam C."/>
            <person name="Jalali M."/>
            <person name="Kalush F."/>
            <person name="Karpen G.H."/>
            <person name="Ke Z."/>
            <person name="Kennison J.A."/>
            <person name="Ketchum K.A."/>
            <person name="Kimmel B.E."/>
            <person name="Kodira C.D."/>
            <person name="Kraft C.L."/>
            <person name="Kravitz S."/>
            <person name="Kulp D."/>
            <person name="Lai Z."/>
            <person name="Lasko P."/>
            <person name="Lei Y."/>
            <person name="Levitsky A.A."/>
            <person name="Li J.H."/>
            <person name="Li Z."/>
            <person name="Liang Y."/>
            <person name="Lin X."/>
            <person name="Liu X."/>
            <person name="Mattei B."/>
            <person name="McIntosh T.C."/>
            <person name="McLeod M.P."/>
            <person name="McPherson D."/>
            <person name="Merkulov G."/>
            <person name="Milshina N.V."/>
            <person name="Mobarry C."/>
            <person name="Morris J."/>
            <person name="Moshrefi A."/>
            <person name="Mount S.M."/>
            <person name="Moy M."/>
            <person name="Murphy B."/>
            <person name="Murphy L."/>
            <person name="Muzny D.M."/>
            <person name="Nelson D.L."/>
            <person name="Nelson D.R."/>
            <person name="Nelson K.A."/>
            <person name="Nixon K."/>
            <person name="Nusskern D.R."/>
            <person name="Pacleb J.M."/>
            <person name="Palazzolo M."/>
            <person name="Pittman G.S."/>
            <person name="Pan S."/>
            <person name="Pollard J."/>
            <person name="Puri V."/>
            <person name="Reese M.G."/>
            <person name="Reinert K."/>
            <person name="Remington K."/>
            <person name="Saunders R.D.C."/>
            <person name="Scheeler F."/>
            <person name="Shen H."/>
            <person name="Shue B.C."/>
            <person name="Siden-Kiamos I."/>
            <person name="Simpson M."/>
            <person name="Skupski M.P."/>
            <person name="Smith T.J."/>
            <person name="Spier E."/>
            <person name="Spradling A.C."/>
            <person name="Stapleton M."/>
            <person name="Strong R."/>
            <person name="Sun E."/>
            <person name="Svirskas R."/>
            <person name="Tector C."/>
            <person name="Turner R."/>
            <person name="Venter E."/>
            <person name="Wang A.H."/>
            <person name="Wang X."/>
            <person name="Wang Z.-Y."/>
            <person name="Wassarman D.A."/>
            <person name="Weinstock G.M."/>
            <person name="Weissenbach J."/>
            <person name="Williams S.M."/>
            <person name="Woodage T."/>
            <person name="Worley K.C."/>
            <person name="Wu D."/>
            <person name="Yang S."/>
            <person name="Yao Q.A."/>
            <person name="Ye J."/>
            <person name="Yeh R.-F."/>
            <person name="Zaveri J.S."/>
            <person name="Zhan M."/>
            <person name="Zhang G."/>
            <person name="Zhao Q."/>
            <person name="Zheng L."/>
            <person name="Zheng X.H."/>
            <person name="Zhong F.N."/>
            <person name="Zhong W."/>
            <person name="Zhou X."/>
            <person name="Zhu S.C."/>
            <person name="Zhu X."/>
            <person name="Smith H.O."/>
            <person name="Gibbs R.A."/>
            <person name="Myers E.W."/>
            <person name="Rubin G.M."/>
            <person name="Venter J.C."/>
        </authorList>
    </citation>
    <scope>NUCLEOTIDE SEQUENCE [LARGE SCALE GENOMIC DNA]</scope>
    <source>
        <strain>Berkeley</strain>
    </source>
</reference>
<reference key="3">
    <citation type="journal article" date="2002" name="Genome Biol.">
        <title>Annotation of the Drosophila melanogaster euchromatic genome: a systematic review.</title>
        <authorList>
            <person name="Misra S."/>
            <person name="Crosby M.A."/>
            <person name="Mungall C.J."/>
            <person name="Matthews B.B."/>
            <person name="Campbell K.S."/>
            <person name="Hradecky P."/>
            <person name="Huang Y."/>
            <person name="Kaminker J.S."/>
            <person name="Millburn G.H."/>
            <person name="Prochnik S.E."/>
            <person name="Smith C.D."/>
            <person name="Tupy J.L."/>
            <person name="Whitfield E.J."/>
            <person name="Bayraktaroglu L."/>
            <person name="Berman B.P."/>
            <person name="Bettencourt B.R."/>
            <person name="Celniker S.E."/>
            <person name="de Grey A.D.N.J."/>
            <person name="Drysdale R.A."/>
            <person name="Harris N.L."/>
            <person name="Richter J."/>
            <person name="Russo S."/>
            <person name="Schroeder A.J."/>
            <person name="Shu S.Q."/>
            <person name="Stapleton M."/>
            <person name="Yamada C."/>
            <person name="Ashburner M."/>
            <person name="Gelbart W.M."/>
            <person name="Rubin G.M."/>
            <person name="Lewis S.E."/>
        </authorList>
    </citation>
    <scope>GENOME REANNOTATION</scope>
    <source>
        <strain>Berkeley</strain>
    </source>
</reference>
<reference key="4">
    <citation type="journal article" date="2002" name="Genome Biol.">
        <title>A Drosophila full-length cDNA resource.</title>
        <authorList>
            <person name="Stapleton M."/>
            <person name="Carlson J.W."/>
            <person name="Brokstein P."/>
            <person name="Yu C."/>
            <person name="Champe M."/>
            <person name="George R.A."/>
            <person name="Guarin H."/>
            <person name="Kronmiller B."/>
            <person name="Pacleb J.M."/>
            <person name="Park S."/>
            <person name="Wan K.H."/>
            <person name="Rubin G.M."/>
            <person name="Celniker S.E."/>
        </authorList>
    </citation>
    <scope>NUCLEOTIDE SEQUENCE [LARGE SCALE MRNA]</scope>
    <source>
        <strain>Berkeley</strain>
        <tissue>Embryo</tissue>
    </source>
</reference>
<reference key="5">
    <citation type="submission" date="2006-03" db="EMBL/GenBank/DDBJ databases">
        <authorList>
            <person name="Stapleton M."/>
            <person name="Carlson J.W."/>
            <person name="Chavez C."/>
            <person name="Frise E."/>
            <person name="George R.A."/>
            <person name="Pacleb J.M."/>
            <person name="Park S."/>
            <person name="Wan K.H."/>
            <person name="Yu C."/>
            <person name="Celniker S.E."/>
        </authorList>
    </citation>
    <scope>NUCLEOTIDE SEQUENCE [LARGE SCALE MRNA]</scope>
    <source>
        <strain>Berkeley</strain>
    </source>
</reference>
<accession>P14318</accession>
<accession>A4UZF7</accession>
<accession>Q1WWC7</accession>
<accession>Q9V6M7</accession>